<sequence length="149" mass="16792">MADQLTEEQIAEFKEAFSLFDKDGNGNITTKELGTVMRSLGQNPTEGELQDMINEVDADGNGTIDFPEFLTMMARKMKDTDSEEEIREAFKVFDKDGNGFISAAELRHVMTNPGEKLTDEEVDEMIREADIDGDGQVNYEEFVKMMTSK</sequence>
<evidence type="ECO:0000250" key="1"/>
<evidence type="ECO:0000255" key="2">
    <source>
        <dbReference type="PROSITE-ProRule" id="PRU00448"/>
    </source>
</evidence>
<evidence type="ECO:0000305" key="3"/>
<proteinExistence type="evidence at transcript level"/>
<comment type="function">
    <text>Calmodulin mediates the control of a large number of enzymes, ion channels and other proteins by Ca(2+). Among the enzymes to be stimulated by the calmodulin-Ca(2+) complex are a number of protein kinases and phosphatases.</text>
</comment>
<comment type="miscellaneous">
    <text>This protein has four functional calcium-binding sites.</text>
</comment>
<comment type="similarity">
    <text evidence="3">Belongs to the calmodulin family.</text>
</comment>
<organism>
    <name type="scientific">Branchiostoma floridae</name>
    <name type="common">Florida lancelet</name>
    <name type="synonym">Amphioxus</name>
    <dbReference type="NCBI Taxonomy" id="7739"/>
    <lineage>
        <taxon>Eukaryota</taxon>
        <taxon>Metazoa</taxon>
        <taxon>Chordata</taxon>
        <taxon>Cephalochordata</taxon>
        <taxon>Leptocardii</taxon>
        <taxon>Amphioxiformes</taxon>
        <taxon>Branchiostomatidae</taxon>
        <taxon>Branchiostoma</taxon>
    </lineage>
</organism>
<keyword id="KW-0007">Acetylation</keyword>
<keyword id="KW-0106">Calcium</keyword>
<keyword id="KW-0479">Metal-binding</keyword>
<keyword id="KW-0488">Methylation</keyword>
<keyword id="KW-1185">Reference proteome</keyword>
<keyword id="KW-0677">Repeat</keyword>
<name>CALM2_BRAFL</name>
<gene>
    <name type="primary">CAM2</name>
</gene>
<accession>Q9XZP2</accession>
<feature type="initiator methionine" description="Removed" evidence="1">
    <location>
        <position position="1"/>
    </location>
</feature>
<feature type="chain" id="PRO_0000198247" description="Calmodulin-2">
    <location>
        <begin position="2"/>
        <end position="149"/>
    </location>
</feature>
<feature type="domain" description="EF-hand 1" evidence="2">
    <location>
        <begin position="8"/>
        <end position="43"/>
    </location>
</feature>
<feature type="domain" description="EF-hand 2" evidence="2">
    <location>
        <begin position="44"/>
        <end position="79"/>
    </location>
</feature>
<feature type="domain" description="EF-hand 3" evidence="2">
    <location>
        <begin position="81"/>
        <end position="116"/>
    </location>
</feature>
<feature type="domain" description="EF-hand 4" evidence="2">
    <location>
        <begin position="117"/>
        <end position="149"/>
    </location>
</feature>
<feature type="binding site" evidence="2">
    <location>
        <position position="21"/>
    </location>
    <ligand>
        <name>Ca(2+)</name>
        <dbReference type="ChEBI" id="CHEBI:29108"/>
        <label>1</label>
    </ligand>
</feature>
<feature type="binding site" evidence="2">
    <location>
        <position position="23"/>
    </location>
    <ligand>
        <name>Ca(2+)</name>
        <dbReference type="ChEBI" id="CHEBI:29108"/>
        <label>1</label>
    </ligand>
</feature>
<feature type="binding site" evidence="2">
    <location>
        <position position="25"/>
    </location>
    <ligand>
        <name>Ca(2+)</name>
        <dbReference type="ChEBI" id="CHEBI:29108"/>
        <label>1</label>
    </ligand>
</feature>
<feature type="binding site" evidence="2">
    <location>
        <position position="27"/>
    </location>
    <ligand>
        <name>Ca(2+)</name>
        <dbReference type="ChEBI" id="CHEBI:29108"/>
        <label>1</label>
    </ligand>
</feature>
<feature type="binding site" evidence="2">
    <location>
        <position position="32"/>
    </location>
    <ligand>
        <name>Ca(2+)</name>
        <dbReference type="ChEBI" id="CHEBI:29108"/>
        <label>1</label>
    </ligand>
</feature>
<feature type="binding site" evidence="2">
    <location>
        <position position="57"/>
    </location>
    <ligand>
        <name>Ca(2+)</name>
        <dbReference type="ChEBI" id="CHEBI:29108"/>
        <label>2</label>
    </ligand>
</feature>
<feature type="binding site" evidence="2">
    <location>
        <position position="59"/>
    </location>
    <ligand>
        <name>Ca(2+)</name>
        <dbReference type="ChEBI" id="CHEBI:29108"/>
        <label>2</label>
    </ligand>
</feature>
<feature type="binding site" evidence="2">
    <location>
        <position position="61"/>
    </location>
    <ligand>
        <name>Ca(2+)</name>
        <dbReference type="ChEBI" id="CHEBI:29108"/>
        <label>2</label>
    </ligand>
</feature>
<feature type="binding site" evidence="2">
    <location>
        <position position="63"/>
    </location>
    <ligand>
        <name>Ca(2+)</name>
        <dbReference type="ChEBI" id="CHEBI:29108"/>
        <label>2</label>
    </ligand>
</feature>
<feature type="binding site" evidence="2">
    <location>
        <position position="68"/>
    </location>
    <ligand>
        <name>Ca(2+)</name>
        <dbReference type="ChEBI" id="CHEBI:29108"/>
        <label>2</label>
    </ligand>
</feature>
<feature type="binding site" evidence="2">
    <location>
        <position position="94"/>
    </location>
    <ligand>
        <name>Ca(2+)</name>
        <dbReference type="ChEBI" id="CHEBI:29108"/>
        <label>3</label>
    </ligand>
</feature>
<feature type="binding site" evidence="2">
    <location>
        <position position="96"/>
    </location>
    <ligand>
        <name>Ca(2+)</name>
        <dbReference type="ChEBI" id="CHEBI:29108"/>
        <label>3</label>
    </ligand>
</feature>
<feature type="binding site" evidence="2">
    <location>
        <position position="98"/>
    </location>
    <ligand>
        <name>Ca(2+)</name>
        <dbReference type="ChEBI" id="CHEBI:29108"/>
        <label>3</label>
    </ligand>
</feature>
<feature type="binding site" evidence="2">
    <location>
        <position position="105"/>
    </location>
    <ligand>
        <name>Ca(2+)</name>
        <dbReference type="ChEBI" id="CHEBI:29108"/>
        <label>3</label>
    </ligand>
</feature>
<feature type="binding site" evidence="2">
    <location>
        <position position="130"/>
    </location>
    <ligand>
        <name>Ca(2+)</name>
        <dbReference type="ChEBI" id="CHEBI:29108"/>
        <label>4</label>
    </ligand>
</feature>
<feature type="binding site" evidence="2">
    <location>
        <position position="132"/>
    </location>
    <ligand>
        <name>Ca(2+)</name>
        <dbReference type="ChEBI" id="CHEBI:29108"/>
        <label>4</label>
    </ligand>
</feature>
<feature type="binding site" evidence="2">
    <location>
        <position position="134"/>
    </location>
    <ligand>
        <name>Ca(2+)</name>
        <dbReference type="ChEBI" id="CHEBI:29108"/>
        <label>4</label>
    </ligand>
</feature>
<feature type="binding site" evidence="2">
    <location>
        <position position="136"/>
    </location>
    <ligand>
        <name>Ca(2+)</name>
        <dbReference type="ChEBI" id="CHEBI:29108"/>
        <label>4</label>
    </ligand>
</feature>
<feature type="binding site" evidence="2">
    <location>
        <position position="141"/>
    </location>
    <ligand>
        <name>Ca(2+)</name>
        <dbReference type="ChEBI" id="CHEBI:29108"/>
        <label>4</label>
    </ligand>
</feature>
<feature type="modified residue" description="N-acetylalanine" evidence="1">
    <location>
        <position position="2"/>
    </location>
</feature>
<feature type="modified residue" description="N6,N6,N6-trimethyllysine" evidence="1">
    <location>
        <position position="116"/>
    </location>
</feature>
<dbReference type="EMBL" id="AJ133836">
    <property type="protein sequence ID" value="CAB40132.2"/>
    <property type="molecule type" value="mRNA"/>
</dbReference>
<dbReference type="SMR" id="Q9XZP2"/>
<dbReference type="eggNOG" id="KOG0027">
    <property type="taxonomic scope" value="Eukaryota"/>
</dbReference>
<dbReference type="Proteomes" id="UP000001554">
    <property type="component" value="Unplaced"/>
</dbReference>
<dbReference type="GO" id="GO:0005737">
    <property type="term" value="C:cytoplasm"/>
    <property type="evidence" value="ECO:0000318"/>
    <property type="project" value="GO_Central"/>
</dbReference>
<dbReference type="GO" id="GO:0005509">
    <property type="term" value="F:calcium ion binding"/>
    <property type="evidence" value="ECO:0000318"/>
    <property type="project" value="GO_Central"/>
</dbReference>
<dbReference type="GO" id="GO:0030234">
    <property type="term" value="F:enzyme regulator activity"/>
    <property type="evidence" value="ECO:0000318"/>
    <property type="project" value="GO_Central"/>
</dbReference>
<dbReference type="GO" id="GO:0000226">
    <property type="term" value="P:microtubule cytoskeleton organization"/>
    <property type="evidence" value="ECO:0000318"/>
    <property type="project" value="GO_Central"/>
</dbReference>
<dbReference type="CDD" id="cd00051">
    <property type="entry name" value="EFh"/>
    <property type="match status" value="2"/>
</dbReference>
<dbReference type="FunFam" id="1.10.238.10:FF:000003">
    <property type="entry name" value="Calmodulin A"/>
    <property type="match status" value="1"/>
</dbReference>
<dbReference type="Gene3D" id="1.10.238.10">
    <property type="entry name" value="EF-hand"/>
    <property type="match status" value="3"/>
</dbReference>
<dbReference type="InterPro" id="IPR050230">
    <property type="entry name" value="CALM/Myosin/TropC-like"/>
</dbReference>
<dbReference type="InterPro" id="IPR011992">
    <property type="entry name" value="EF-hand-dom_pair"/>
</dbReference>
<dbReference type="InterPro" id="IPR018247">
    <property type="entry name" value="EF_Hand_1_Ca_BS"/>
</dbReference>
<dbReference type="InterPro" id="IPR002048">
    <property type="entry name" value="EF_hand_dom"/>
</dbReference>
<dbReference type="PANTHER" id="PTHR23048:SF0">
    <property type="entry name" value="CALMODULIN LIKE 3"/>
    <property type="match status" value="1"/>
</dbReference>
<dbReference type="PANTHER" id="PTHR23048">
    <property type="entry name" value="MYOSIN LIGHT CHAIN 1, 3"/>
    <property type="match status" value="1"/>
</dbReference>
<dbReference type="Pfam" id="PF13499">
    <property type="entry name" value="EF-hand_7"/>
    <property type="match status" value="2"/>
</dbReference>
<dbReference type="SMART" id="SM00054">
    <property type="entry name" value="EFh"/>
    <property type="match status" value="4"/>
</dbReference>
<dbReference type="SUPFAM" id="SSF47473">
    <property type="entry name" value="EF-hand"/>
    <property type="match status" value="1"/>
</dbReference>
<dbReference type="PROSITE" id="PS00018">
    <property type="entry name" value="EF_HAND_1"/>
    <property type="match status" value="4"/>
</dbReference>
<dbReference type="PROSITE" id="PS50222">
    <property type="entry name" value="EF_HAND_2"/>
    <property type="match status" value="4"/>
</dbReference>
<protein>
    <recommendedName>
        <fullName>Calmodulin-2</fullName>
        <shortName>CaM 2</shortName>
    </recommendedName>
</protein>
<reference key="1">
    <citation type="journal article" date="2000" name="J. Mol. Evol.">
        <title>Molecular evolution of calmodulin and calmodulin-like genes in the cephalochordate Branchiostoma.</title>
        <authorList>
            <person name="Karabinos A."/>
            <person name="Bhattacharya D."/>
        </authorList>
    </citation>
    <scope>NUCLEOTIDE SEQUENCE [MRNA]</scope>
</reference>